<sequence>MSDISKASLPKAIFLMGPTASGKTALAIELRKILPVELISVDSALIYKGMDIGTAKPNAEELLAAPHRLLDIRDPSQAYSAADFRRDALAEMADITAAGRIPLLVGGTMLYFKALLEGLSPLPSADPEVRARIEQQAAEQGWESLHRQLQEVDPVAAARIHPNDPQRLSRALEVFFISGKTLTELTQTSGDALPYQVHQFAIAPASRELLHQRIEQRFHQMLASGFEAEVRALFARGDLHTDLPSIRCVGYRQMWSYLEGEISYDEMVYRGVCATRQLAKRQITWLRGWEGVHWLDSEKPEQARDEVLQVVGAIAG</sequence>
<keyword id="KW-0002">3D-structure</keyword>
<keyword id="KW-0067">ATP-binding</keyword>
<keyword id="KW-0460">Magnesium</keyword>
<keyword id="KW-0547">Nucleotide-binding</keyword>
<keyword id="KW-1185">Reference proteome</keyword>
<keyword id="KW-0808">Transferase</keyword>
<keyword id="KW-0819">tRNA processing</keyword>
<comment type="function">
    <text evidence="4 5">Catalyzes the transfer of a dimethylallyl group onto the adenine at position 37 in tRNAs that read codons beginning with uridine, leading to the formation of N6-(dimethylallyl)adenosine (i(6)A).</text>
</comment>
<comment type="catalytic activity">
    <reaction>
        <text>adenosine(37) in tRNA + dimethylallyl diphosphate = N(6)-dimethylallyladenosine(37) in tRNA + diphosphate</text>
        <dbReference type="Rhea" id="RHEA:26482"/>
        <dbReference type="Rhea" id="RHEA-COMP:10162"/>
        <dbReference type="Rhea" id="RHEA-COMP:10375"/>
        <dbReference type="ChEBI" id="CHEBI:33019"/>
        <dbReference type="ChEBI" id="CHEBI:57623"/>
        <dbReference type="ChEBI" id="CHEBI:74411"/>
        <dbReference type="ChEBI" id="CHEBI:74415"/>
        <dbReference type="EC" id="2.5.1.75"/>
    </reaction>
</comment>
<comment type="cofactor">
    <cofactor evidence="4">
        <name>Mg(2+)</name>
        <dbReference type="ChEBI" id="CHEBI:18420"/>
    </cofactor>
</comment>
<comment type="activity regulation">
    <text evidence="5">Strongly inhibited by ADP, ATP and other NTPs.</text>
</comment>
<comment type="biophysicochemical properties">
    <kinetics>
        <KM evidence="4 5">96 nM for tRNA(Phe)</KM>
        <KM evidence="4 5">3.2 uM for DMAPP</KM>
    </kinetics>
    <phDependence>
        <text evidence="4 5">Optimum pH is 6.5-9.</text>
    </phDependence>
</comment>
<comment type="subunit">
    <text evidence="3 4 5">Monomer. Binds to tRNA(Phe).</text>
</comment>
<comment type="induction">
    <text>By 2-aminopurine.</text>
</comment>
<comment type="miscellaneous">
    <text>Specific tRNA undermodification may be a switch to higher mutation frequency when cells are subject to environmental stresses other than treatment with mutagens.</text>
</comment>
<comment type="similarity">
    <text evidence="6">Belongs to the IPP transferase family.</text>
</comment>
<reference key="1">
    <citation type="journal article" date="1991" name="J. Bacteriol.">
        <title>Structure of Escherichia coli K-12 miaA and characterization of the mutator phenotype caused by miaA insertion mutations.</title>
        <authorList>
            <person name="Winkler M.E."/>
            <person name="Connolly D.M."/>
        </authorList>
    </citation>
    <scope>NUCLEOTIDE SEQUENCE [GENOMIC DNA]</scope>
    <source>
        <strain>K12</strain>
    </source>
</reference>
<reference key="2">
    <citation type="journal article" date="1995" name="Nucleic Acids Res.">
        <title>Analysis of the Escherichia coli genome VI: DNA sequence of the region from 92.8 through 100 minutes.</title>
        <authorList>
            <person name="Burland V.D."/>
            <person name="Plunkett G. III"/>
            <person name="Sofia H.J."/>
            <person name="Daniels D.L."/>
            <person name="Blattner F.R."/>
        </authorList>
    </citation>
    <scope>NUCLEOTIDE SEQUENCE [LARGE SCALE GENOMIC DNA]</scope>
    <source>
        <strain>K12 / MG1655 / ATCC 47076</strain>
    </source>
</reference>
<reference key="3">
    <citation type="journal article" date="1997" name="Science">
        <title>The complete genome sequence of Escherichia coli K-12.</title>
        <authorList>
            <person name="Blattner F.R."/>
            <person name="Plunkett G. III"/>
            <person name="Bloch C.A."/>
            <person name="Perna N.T."/>
            <person name="Burland V."/>
            <person name="Riley M."/>
            <person name="Collado-Vides J."/>
            <person name="Glasner J.D."/>
            <person name="Rode C.K."/>
            <person name="Mayhew G.F."/>
            <person name="Gregor J."/>
            <person name="Davis N.W."/>
            <person name="Kirkpatrick H.A."/>
            <person name="Goeden M.A."/>
            <person name="Rose D.J."/>
            <person name="Mau B."/>
            <person name="Shao Y."/>
        </authorList>
    </citation>
    <scope>NUCLEOTIDE SEQUENCE [LARGE SCALE GENOMIC DNA]</scope>
    <source>
        <strain>K12 / MG1655 / ATCC 47076</strain>
    </source>
</reference>
<reference key="4">
    <citation type="journal article" date="2006" name="Mol. Syst. Biol.">
        <title>Highly accurate genome sequences of Escherichia coli K-12 strains MG1655 and W3110.</title>
        <authorList>
            <person name="Hayashi K."/>
            <person name="Morooka N."/>
            <person name="Yamamoto Y."/>
            <person name="Fujita K."/>
            <person name="Isono K."/>
            <person name="Choi S."/>
            <person name="Ohtsubo E."/>
            <person name="Baba T."/>
            <person name="Wanner B.L."/>
            <person name="Mori H."/>
            <person name="Horiuchi T."/>
        </authorList>
    </citation>
    <scope>NUCLEOTIDE SEQUENCE [LARGE SCALE GENOMIC DNA]</scope>
    <source>
        <strain>K12 / W3110 / ATCC 27325 / DSM 5911</strain>
    </source>
</reference>
<reference key="5">
    <citation type="journal article" date="1989" name="J. Bacteriol.">
        <title>Genetic and physiological relationships among the miaA gene, 2-methylthio-N6-(delta 2-isopentenyl)-adenosine tRNA modification, and spontaneous mutagenesis in Escherichia coli K-12.</title>
        <authorList>
            <person name="Connolly D.M."/>
            <person name="Winkler M.E."/>
        </authorList>
    </citation>
    <scope>NUCLEOTIDE SEQUENCE [GENOMIC DNA] OF 109-170</scope>
    <source>
        <strain>K12</strain>
    </source>
</reference>
<reference key="6">
    <citation type="journal article" date="1991" name="Nucleic Acids Res.">
        <title>Identification and sequence determination of the host factor gene for bacteriophage Q beta.</title>
        <authorList>
            <person name="Kajitani M."/>
            <person name="Ishihama A."/>
        </authorList>
    </citation>
    <scope>NUCLEOTIDE SEQUENCE [GENOMIC DNA] OF 101-316</scope>
</reference>
<reference key="7">
    <citation type="submission" date="1993-05" db="EMBL/GenBank/DDBJ databases">
        <authorList>
            <person name="Noble J.A."/>
            <person name="Innis M.A."/>
            <person name="Banuett F."/>
            <person name="Herskowitz I."/>
        </authorList>
    </citation>
    <scope>NUCLEOTIDE SEQUENCE [GENOMIC DNA] OF 101-316</scope>
    <source>
        <strain>K12</strain>
    </source>
</reference>
<reference key="8">
    <citation type="journal article" date="1992" name="Nucleic Acids Res.">
        <title>Nonconserved segment of the MutL protein from Escherichia coli K-12 and Salmonella typhimurium.</title>
        <authorList>
            <person name="Tsui H.-C.T."/>
            <person name="Mandavilli B.S."/>
            <person name="Winkler M.E."/>
        </authorList>
    </citation>
    <scope>NUCLEOTIDE SEQUENCE [GENOMIC DNA] OF 1-65</scope>
    <source>
        <strain>K12</strain>
    </source>
</reference>
<reference key="9">
    <citation type="journal article" date="1997" name="Biochemistry">
        <title>Escherichia coli dimethylallyl diphosphate:tRNA dimethylallyltransferase: a binding mechanism for recombinant enzyme.</title>
        <authorList>
            <person name="Moore J.A."/>
            <person name="Poulter C.D."/>
        </authorList>
    </citation>
    <scope>FUNCTION</scope>
    <scope>COFACTOR</scope>
    <scope>BIOPHYSICOCHEMICAL PROPERTIES</scope>
    <scope>SUBUNIT</scope>
</reference>
<reference key="10">
    <citation type="journal article" date="1997" name="J. Biol. Chem.">
        <title>Regulation of substrate recognition by the MiaA tRNA prenyltransferase modification enzyme of Escherichia coli K-12.</title>
        <authorList>
            <person name="Leung H.-C.E."/>
            <person name="Chen Y."/>
            <person name="Winkler M.E."/>
        </authorList>
    </citation>
    <scope>FUNCTION</scope>
    <scope>ACTIVITY REGULATION</scope>
    <scope>BIOPHYSICOCHEMICAL PROPERTIES</scope>
    <scope>SUBUNIT</scope>
</reference>
<reference key="11">
    <citation type="journal article" date="2009" name="J. Biol. Chem.">
        <title>RNA-protein mutually induced fit: structure of Escherichia coli isopentenyl-tRNA transferase in complex with tRNA(Phe).</title>
        <authorList>
            <person name="Seif E."/>
            <person name="Hallberg B.M."/>
        </authorList>
    </citation>
    <scope>X-RAY CRYSTALLOGRAPHY (2.5 ANGSTROMS) IN COMPLEX WITH TRNA(PHE)</scope>
</reference>
<accession>P16384</accession>
<accession>Q2M6D4</accession>
<name>MIAA_ECOLI</name>
<proteinExistence type="evidence at protein level"/>
<evidence type="ECO:0000250" key="1"/>
<evidence type="ECO:0000255" key="2"/>
<evidence type="ECO:0000269" key="3">
    <source>
    </source>
</evidence>
<evidence type="ECO:0000269" key="4">
    <source>
    </source>
</evidence>
<evidence type="ECO:0000269" key="5">
    <source>
    </source>
</evidence>
<evidence type="ECO:0000305" key="6"/>
<evidence type="ECO:0007829" key="7">
    <source>
        <dbReference type="PDB" id="2ZM5"/>
    </source>
</evidence>
<evidence type="ECO:0007829" key="8">
    <source>
        <dbReference type="PDB" id="3FOZ"/>
    </source>
</evidence>
<feature type="chain" id="PRO_0000163913" description="tRNA dimethylallyltransferase">
    <location>
        <begin position="1"/>
        <end position="316"/>
    </location>
</feature>
<feature type="region of interest" description="Interaction with substrate tRNA">
    <location>
        <begin position="42"/>
        <end position="45"/>
    </location>
</feature>
<feature type="region of interest" description="Interaction with substrate tRNA">
    <location>
        <begin position="120"/>
        <end position="124"/>
    </location>
</feature>
<feature type="region of interest" description="Interaction with substrate tRNA">
    <location>
        <begin position="166"/>
        <end position="170"/>
    </location>
</feature>
<feature type="region of interest" description="Interaction with isopentenylpyrophosphate transferase">
    <location>
        <begin position="206"/>
        <end position="229"/>
    </location>
</feature>
<feature type="region of interest" description="Interaction with substrate tRNA">
    <location>
        <begin position="247"/>
        <end position="252"/>
    </location>
</feature>
<feature type="region of interest" description="Interaction with substrate tRNA">
    <location>
        <begin position="280"/>
        <end position="287"/>
    </location>
</feature>
<feature type="binding site" evidence="2">
    <location>
        <begin position="17"/>
        <end position="24"/>
    </location>
    <ligand>
        <name>ATP</name>
        <dbReference type="ChEBI" id="CHEBI:30616"/>
    </ligand>
</feature>
<feature type="binding site" evidence="1">
    <location>
        <begin position="19"/>
        <end position="24"/>
    </location>
    <ligand>
        <name>substrate</name>
    </ligand>
</feature>
<feature type="site" description="Interaction with substrate tRNA">
    <location>
        <position position="108"/>
    </location>
</feature>
<feature type="site" description="Interaction with substrate tRNA">
    <location>
        <position position="130"/>
    </location>
</feature>
<feature type="site" description="Required for specificity towards tRNA substrates containing a purine at position 29">
    <location>
        <position position="280"/>
    </location>
</feature>
<feature type="sequence conflict" description="In Ref. 7; AAC43396." evidence="6" ref="7">
    <original>I</original>
    <variation>D</variation>
    <location>
        <position position="101"/>
    </location>
</feature>
<feature type="strand" evidence="8">
    <location>
        <begin position="11"/>
        <end position="16"/>
    </location>
</feature>
<feature type="helix" evidence="8">
    <location>
        <begin position="23"/>
        <end position="33"/>
    </location>
</feature>
<feature type="strand" evidence="8">
    <location>
        <begin position="36"/>
        <end position="40"/>
    </location>
</feature>
<feature type="turn" evidence="8">
    <location>
        <begin position="43"/>
        <end position="46"/>
    </location>
</feature>
<feature type="turn" evidence="8">
    <location>
        <begin position="52"/>
        <end position="55"/>
    </location>
</feature>
<feature type="helix" evidence="8">
    <location>
        <begin position="59"/>
        <end position="64"/>
    </location>
</feature>
<feature type="strand" evidence="7">
    <location>
        <begin position="67"/>
        <end position="71"/>
    </location>
</feature>
<feature type="helix" evidence="8">
    <location>
        <begin position="81"/>
        <end position="97"/>
    </location>
</feature>
<feature type="strand" evidence="8">
    <location>
        <begin position="101"/>
        <end position="107"/>
    </location>
</feature>
<feature type="helix" evidence="8">
    <location>
        <begin position="109"/>
        <end position="116"/>
    </location>
</feature>
<feature type="helix" evidence="8">
    <location>
        <begin position="127"/>
        <end position="152"/>
    </location>
</feature>
<feature type="helix" evidence="8">
    <location>
        <begin position="154"/>
        <end position="159"/>
    </location>
</feature>
<feature type="helix" evidence="8">
    <location>
        <begin position="165"/>
        <end position="178"/>
    </location>
</feature>
<feature type="helix" evidence="8">
    <location>
        <begin position="182"/>
        <end position="186"/>
    </location>
</feature>
<feature type="strand" evidence="8">
    <location>
        <begin position="194"/>
        <end position="203"/>
    </location>
</feature>
<feature type="helix" evidence="8">
    <location>
        <begin position="207"/>
        <end position="223"/>
    </location>
</feature>
<feature type="helix" evidence="8">
    <location>
        <begin position="226"/>
        <end position="236"/>
    </location>
</feature>
<feature type="turn" evidence="8">
    <location>
        <begin position="244"/>
        <end position="247"/>
    </location>
</feature>
<feature type="helix" evidence="8">
    <location>
        <begin position="251"/>
        <end position="259"/>
    </location>
</feature>
<feature type="helix" evidence="8">
    <location>
        <begin position="264"/>
        <end position="287"/>
    </location>
</feature>
<feature type="strand" evidence="8">
    <location>
        <begin position="293"/>
        <end position="296"/>
    </location>
</feature>
<feature type="helix" evidence="8">
    <location>
        <begin position="300"/>
        <end position="308"/>
    </location>
</feature>
<protein>
    <recommendedName>
        <fullName>tRNA dimethylallyltransferase</fullName>
        <ecNumber>2.5.1.75</ecNumber>
    </recommendedName>
    <alternativeName>
        <fullName>Dimethylallyl diphosphate:tRNA dimethylallyltransferase</fullName>
        <shortName>DMAPP:tRNA dimethylallyltransferase</shortName>
        <shortName>DMATase</shortName>
    </alternativeName>
    <alternativeName>
        <fullName>Isopentenyl-diphosphate:tRNA isopentenyltransferase</fullName>
        <shortName>IPP transferase</shortName>
        <shortName>IPPT</shortName>
        <shortName>IPTase</shortName>
    </alternativeName>
</protein>
<gene>
    <name type="primary">miaA</name>
    <name type="synonym">trpX</name>
    <name type="ordered locus">b4171</name>
    <name type="ordered locus">JW4129</name>
</gene>
<organism>
    <name type="scientific">Escherichia coli (strain K12)</name>
    <dbReference type="NCBI Taxonomy" id="83333"/>
    <lineage>
        <taxon>Bacteria</taxon>
        <taxon>Pseudomonadati</taxon>
        <taxon>Pseudomonadota</taxon>
        <taxon>Gammaproteobacteria</taxon>
        <taxon>Enterobacterales</taxon>
        <taxon>Enterobacteriaceae</taxon>
        <taxon>Escherichia</taxon>
    </lineage>
</organism>
<dbReference type="EC" id="2.5.1.75"/>
<dbReference type="EMBL" id="M63655">
    <property type="protein sequence ID" value="AAA24174.1"/>
    <property type="molecule type" value="Genomic_DNA"/>
</dbReference>
<dbReference type="EMBL" id="U14003">
    <property type="protein sequence ID" value="AAA97067.1"/>
    <property type="molecule type" value="Genomic_DNA"/>
</dbReference>
<dbReference type="EMBL" id="U00096">
    <property type="protein sequence ID" value="AAC77128.1"/>
    <property type="molecule type" value="Genomic_DNA"/>
</dbReference>
<dbReference type="EMBL" id="AP009048">
    <property type="protein sequence ID" value="BAE78172.1"/>
    <property type="molecule type" value="Genomic_DNA"/>
</dbReference>
<dbReference type="EMBL" id="D00743">
    <property type="protein sequence ID" value="BAA00643.1"/>
    <property type="molecule type" value="Genomic_DNA"/>
</dbReference>
<dbReference type="EMBL" id="U00005">
    <property type="protein sequence ID" value="AAC43396.1"/>
    <property type="molecule type" value="Unassigned_DNA"/>
</dbReference>
<dbReference type="EMBL" id="Z11831">
    <property type="protein sequence ID" value="CAA77852.1"/>
    <property type="molecule type" value="Genomic_DNA"/>
</dbReference>
<dbReference type="PIR" id="B37318">
    <property type="entry name" value="B37318"/>
</dbReference>
<dbReference type="RefSeq" id="NP_418592.1">
    <property type="nucleotide sequence ID" value="NC_000913.3"/>
</dbReference>
<dbReference type="RefSeq" id="WP_001280345.1">
    <property type="nucleotide sequence ID" value="NZ_STEB01000013.1"/>
</dbReference>
<dbReference type="PDB" id="2ZM5">
    <property type="method" value="X-ray"/>
    <property type="resolution" value="2.55 A"/>
    <property type="chains" value="A/B=1-316"/>
</dbReference>
<dbReference type="PDB" id="2ZXU">
    <property type="method" value="X-ray"/>
    <property type="resolution" value="2.75 A"/>
    <property type="chains" value="A/B=1-316"/>
</dbReference>
<dbReference type="PDB" id="3FOZ">
    <property type="method" value="X-ray"/>
    <property type="resolution" value="2.50 A"/>
    <property type="chains" value="A/B=1-316"/>
</dbReference>
<dbReference type="PDBsum" id="2ZM5"/>
<dbReference type="PDBsum" id="2ZXU"/>
<dbReference type="PDBsum" id="3FOZ"/>
<dbReference type="SMR" id="P16384"/>
<dbReference type="BioGRID" id="4263002">
    <property type="interactions" value="86"/>
</dbReference>
<dbReference type="BioGRID" id="852982">
    <property type="interactions" value="2"/>
</dbReference>
<dbReference type="FunCoup" id="P16384">
    <property type="interactions" value="713"/>
</dbReference>
<dbReference type="IntAct" id="P16384">
    <property type="interactions" value="5"/>
</dbReference>
<dbReference type="STRING" id="511145.b4171"/>
<dbReference type="DrugBank" id="DB02270">
    <property type="generic name" value="Dimethylallyl S-Thiolodiphosphate"/>
</dbReference>
<dbReference type="jPOST" id="P16384"/>
<dbReference type="PaxDb" id="511145-b4171"/>
<dbReference type="EnsemblBacteria" id="AAC77128">
    <property type="protein sequence ID" value="AAC77128"/>
    <property type="gene ID" value="b4171"/>
</dbReference>
<dbReference type="GeneID" id="93777650"/>
<dbReference type="GeneID" id="948690"/>
<dbReference type="KEGG" id="ecj:JW4129"/>
<dbReference type="KEGG" id="eco:b4171"/>
<dbReference type="KEGG" id="ecoc:C3026_22540"/>
<dbReference type="PATRIC" id="fig|1411691.4.peg.2530"/>
<dbReference type="EchoBASE" id="EB0590"/>
<dbReference type="eggNOG" id="COG0324">
    <property type="taxonomic scope" value="Bacteria"/>
</dbReference>
<dbReference type="HOGENOM" id="CLU_032616_0_0_6"/>
<dbReference type="InParanoid" id="P16384"/>
<dbReference type="OMA" id="VPHYLID"/>
<dbReference type="OrthoDB" id="9776390at2"/>
<dbReference type="PhylomeDB" id="P16384"/>
<dbReference type="BioCyc" id="EcoCyc:EG10595-MONOMER"/>
<dbReference type="BioCyc" id="MetaCyc:EG10595-MONOMER"/>
<dbReference type="EvolutionaryTrace" id="P16384"/>
<dbReference type="PRO" id="PR:P16384"/>
<dbReference type="Proteomes" id="UP000000625">
    <property type="component" value="Chromosome"/>
</dbReference>
<dbReference type="GO" id="GO:0005524">
    <property type="term" value="F:ATP binding"/>
    <property type="evidence" value="ECO:0007669"/>
    <property type="project" value="UniProtKB-UniRule"/>
</dbReference>
<dbReference type="GO" id="GO:0052381">
    <property type="term" value="F:tRNA dimethylallyltransferase activity"/>
    <property type="evidence" value="ECO:0000314"/>
    <property type="project" value="EcoCyc"/>
</dbReference>
<dbReference type="GO" id="GO:0034605">
    <property type="term" value="P:cellular response to heat"/>
    <property type="evidence" value="ECO:0000315"/>
    <property type="project" value="EcoCyc"/>
</dbReference>
<dbReference type="GO" id="GO:1990497">
    <property type="term" value="P:regulation of cytoplasmic translation in response to stress"/>
    <property type="evidence" value="ECO:0000315"/>
    <property type="project" value="EcoCyc"/>
</dbReference>
<dbReference type="GO" id="GO:0006400">
    <property type="term" value="P:tRNA modification"/>
    <property type="evidence" value="ECO:0000315"/>
    <property type="project" value="EcoCyc"/>
</dbReference>
<dbReference type="FunFam" id="1.10.20.140:FF:000001">
    <property type="entry name" value="tRNA dimethylallyltransferase"/>
    <property type="match status" value="1"/>
</dbReference>
<dbReference type="FunFam" id="1.10.287.890:FF:000001">
    <property type="entry name" value="tRNA dimethylallyltransferase"/>
    <property type="match status" value="1"/>
</dbReference>
<dbReference type="Gene3D" id="1.10.20.140">
    <property type="match status" value="1"/>
</dbReference>
<dbReference type="Gene3D" id="1.10.287.890">
    <property type="entry name" value="Crystal structure of tRNA isopentenylpyrophosphate transferase (bh2366) domain"/>
    <property type="match status" value="1"/>
</dbReference>
<dbReference type="Gene3D" id="3.40.50.300">
    <property type="entry name" value="P-loop containing nucleotide triphosphate hydrolases"/>
    <property type="match status" value="1"/>
</dbReference>
<dbReference type="HAMAP" id="MF_00185">
    <property type="entry name" value="IPP_trans"/>
    <property type="match status" value="1"/>
</dbReference>
<dbReference type="InterPro" id="IPR039657">
    <property type="entry name" value="Dimethylallyltransferase"/>
</dbReference>
<dbReference type="InterPro" id="IPR018022">
    <property type="entry name" value="IPT"/>
</dbReference>
<dbReference type="InterPro" id="IPR027417">
    <property type="entry name" value="P-loop_NTPase"/>
</dbReference>
<dbReference type="NCBIfam" id="TIGR00174">
    <property type="entry name" value="miaA"/>
    <property type="match status" value="1"/>
</dbReference>
<dbReference type="PANTHER" id="PTHR11088">
    <property type="entry name" value="TRNA DIMETHYLALLYLTRANSFERASE"/>
    <property type="match status" value="1"/>
</dbReference>
<dbReference type="PANTHER" id="PTHR11088:SF60">
    <property type="entry name" value="TRNA DIMETHYLALLYLTRANSFERASE"/>
    <property type="match status" value="1"/>
</dbReference>
<dbReference type="Pfam" id="PF01715">
    <property type="entry name" value="IPPT"/>
    <property type="match status" value="1"/>
</dbReference>
<dbReference type="SUPFAM" id="SSF52540">
    <property type="entry name" value="P-loop containing nucleoside triphosphate hydrolases"/>
    <property type="match status" value="1"/>
</dbReference>